<feature type="chain" id="PRO_0000450095" description="Beta-mammal toxin Co1">
    <location>
        <begin position="1"/>
        <end position="66"/>
    </location>
</feature>
<feature type="domain" description="LCN-type CS-alpha/beta" evidence="1">
    <location>
        <begin position="1"/>
        <end position="66"/>
    </location>
</feature>
<feature type="disulfide bond" evidence="1">
    <location>
        <begin position="12"/>
        <end position="65"/>
    </location>
</feature>
<feature type="disulfide bond" evidence="1">
    <location>
        <begin position="16"/>
        <end position="41"/>
    </location>
</feature>
<feature type="disulfide bond" evidence="1">
    <location>
        <begin position="25"/>
        <end position="46"/>
    </location>
</feature>
<feature type="disulfide bond" evidence="1">
    <location>
        <begin position="29"/>
        <end position="48"/>
    </location>
</feature>
<protein>
    <recommendedName>
        <fullName evidence="3">Beta-mammal toxin Co1</fullName>
    </recommendedName>
</protein>
<comment type="function">
    <text evidence="2">Beta toxins bind voltage-independently at site-4 of sodium channels (Nav) and shift the voltage of activation toward more negative potentials thereby affecting sodium channel activation and promoting spontaneous and repetitive firing (PubMed:31734253). This toxin acts on human Nav1.6/SCN8A voltage-gated sodium channels (PubMed:31734253). In vivo, is lethal to mice 40 minutes after intraperitoneal injection at a dose of 5ug (PubMed:31734253). No activity is observed when injected into crickets or woodlice (PubMed:31734253).</text>
</comment>
<comment type="subcellular location">
    <subcellularLocation>
        <location evidence="2">Secreted</location>
    </subcellularLocation>
</comment>
<comment type="tissue specificity">
    <text evidence="5">Expressed by the venom gland.</text>
</comment>
<comment type="domain">
    <text evidence="4">Has the structural arrangement of an alpha-helix connected to antiparallel beta-sheets by disulfide bonds (CS-alpha/beta).</text>
</comment>
<comment type="mass spectrometry"/>
<comment type="similarity">
    <text evidence="4">Belongs to the long (4 C-C) scorpion toxin superfamily. Sodium channel inhibitor family. Beta subfamily.</text>
</comment>
<evidence type="ECO:0000255" key="1">
    <source>
        <dbReference type="PROSITE-ProRule" id="PRU01210"/>
    </source>
</evidence>
<evidence type="ECO:0000269" key="2">
    <source>
    </source>
</evidence>
<evidence type="ECO:0000303" key="3">
    <source>
    </source>
</evidence>
<evidence type="ECO:0000305" key="4"/>
<evidence type="ECO:0000305" key="5">
    <source>
    </source>
</evidence>
<sequence>KEGYLVNHSTGCKYECFKLGDNDYCLRECKQQYGKGAGGYCYAFGCWCTHLYEQAVVWPLPKKTCN</sequence>
<proteinExistence type="evidence at protein level"/>
<accession>C0HLF2</accession>
<name>SCX1_CENOR</name>
<organism evidence="3">
    <name type="scientific">Centruroides ornatus</name>
    <name type="common">Scorpion</name>
    <name type="synonym">Centruroides infamatus ornatus</name>
    <dbReference type="NCBI Taxonomy" id="2338500"/>
    <lineage>
        <taxon>Eukaryota</taxon>
        <taxon>Metazoa</taxon>
        <taxon>Ecdysozoa</taxon>
        <taxon>Arthropoda</taxon>
        <taxon>Chelicerata</taxon>
        <taxon>Arachnida</taxon>
        <taxon>Scorpiones</taxon>
        <taxon>Buthida</taxon>
        <taxon>Buthoidea</taxon>
        <taxon>Buthidae</taxon>
        <taxon>Centruroides</taxon>
    </lineage>
</organism>
<keyword id="KW-0903">Direct protein sequencing</keyword>
<keyword id="KW-1015">Disulfide bond</keyword>
<keyword id="KW-0872">Ion channel impairing toxin</keyword>
<keyword id="KW-0528">Neurotoxin</keyword>
<keyword id="KW-0964">Secreted</keyword>
<keyword id="KW-0800">Toxin</keyword>
<keyword id="KW-0738">Voltage-gated sodium channel impairing toxin</keyword>
<dbReference type="SMR" id="C0HLF2"/>
<dbReference type="GO" id="GO:0005576">
    <property type="term" value="C:extracellular region"/>
    <property type="evidence" value="ECO:0000314"/>
    <property type="project" value="UniProtKB"/>
</dbReference>
<dbReference type="GO" id="GO:0019871">
    <property type="term" value="F:sodium channel inhibitor activity"/>
    <property type="evidence" value="ECO:0000314"/>
    <property type="project" value="UniProtKB"/>
</dbReference>
<dbReference type="GO" id="GO:0090729">
    <property type="term" value="F:toxin activity"/>
    <property type="evidence" value="ECO:0000314"/>
    <property type="project" value="UniProtKB"/>
</dbReference>
<dbReference type="GO" id="GO:0006952">
    <property type="term" value="P:defense response"/>
    <property type="evidence" value="ECO:0007669"/>
    <property type="project" value="InterPro"/>
</dbReference>
<dbReference type="GO" id="GO:0044493">
    <property type="term" value="P:envenomation resulting in negative regulation of voltage-gated sodium channel activity in another organism"/>
    <property type="evidence" value="ECO:0000314"/>
    <property type="project" value="UniProtKB"/>
</dbReference>
<dbReference type="CDD" id="cd23106">
    <property type="entry name" value="neurotoxins_LC_scorpion"/>
    <property type="match status" value="1"/>
</dbReference>
<dbReference type="FunFam" id="3.30.30.10:FF:000002">
    <property type="entry name" value="Alpha-like toxin BmK-M1"/>
    <property type="match status" value="1"/>
</dbReference>
<dbReference type="Gene3D" id="3.30.30.10">
    <property type="entry name" value="Knottin, scorpion toxin-like"/>
    <property type="match status" value="1"/>
</dbReference>
<dbReference type="InterPro" id="IPR044062">
    <property type="entry name" value="LCN-type_CS_alpha_beta_dom"/>
</dbReference>
<dbReference type="InterPro" id="IPR003614">
    <property type="entry name" value="Scorpion_toxin-like"/>
</dbReference>
<dbReference type="InterPro" id="IPR036574">
    <property type="entry name" value="Scorpion_toxin-like_sf"/>
</dbReference>
<dbReference type="InterPro" id="IPR018218">
    <property type="entry name" value="Scorpion_toxinL"/>
</dbReference>
<dbReference type="InterPro" id="IPR002061">
    <property type="entry name" value="Scorpion_toxinL/defensin"/>
</dbReference>
<dbReference type="Pfam" id="PF00537">
    <property type="entry name" value="Toxin_3"/>
    <property type="match status" value="1"/>
</dbReference>
<dbReference type="PRINTS" id="PR00285">
    <property type="entry name" value="SCORPNTOXIN"/>
</dbReference>
<dbReference type="SMART" id="SM00505">
    <property type="entry name" value="Knot1"/>
    <property type="match status" value="1"/>
</dbReference>
<dbReference type="SUPFAM" id="SSF57095">
    <property type="entry name" value="Scorpion toxin-like"/>
    <property type="match status" value="1"/>
</dbReference>
<dbReference type="PROSITE" id="PS51863">
    <property type="entry name" value="LCN_CSAB"/>
    <property type="match status" value="1"/>
</dbReference>
<reference evidence="4" key="1">
    <citation type="journal article" date="2020" name="Toxicon">
        <title>Biochemical characterization of the venom from the Mexican scorpion Centruroides ornatus, a dangerous species to humans.</title>
        <authorList>
            <person name="Garcia-Guerrero I.A."/>
            <person name="Carcamo-Noriega E."/>
            <person name="Gomez-Lagunas F."/>
            <person name="Gonzalez-Santillan E."/>
            <person name="Zamudio F.Z."/>
            <person name="Gurrola G.B."/>
            <person name="Possani L.D."/>
        </authorList>
    </citation>
    <scope>PROTEIN SEQUENCE</scope>
    <scope>FUNCTION</scope>
    <scope>SUBCELLULAR LOCATION</scope>
    <scope>MASS SPECTROMETRY</scope>
    <source>
        <tissue evidence="3">Venom</tissue>
    </source>
</reference>